<gene>
    <name evidence="1" type="primary">rpmI</name>
    <name type="ordered locus">E2348C_1846</name>
</gene>
<reference key="1">
    <citation type="journal article" date="2009" name="J. Bacteriol.">
        <title>Complete genome sequence and comparative genome analysis of enteropathogenic Escherichia coli O127:H6 strain E2348/69.</title>
        <authorList>
            <person name="Iguchi A."/>
            <person name="Thomson N.R."/>
            <person name="Ogura Y."/>
            <person name="Saunders D."/>
            <person name="Ooka T."/>
            <person name="Henderson I.R."/>
            <person name="Harris D."/>
            <person name="Asadulghani M."/>
            <person name="Kurokawa K."/>
            <person name="Dean P."/>
            <person name="Kenny B."/>
            <person name="Quail M.A."/>
            <person name="Thurston S."/>
            <person name="Dougan G."/>
            <person name="Hayashi T."/>
            <person name="Parkhill J."/>
            <person name="Frankel G."/>
        </authorList>
    </citation>
    <scope>NUCLEOTIDE SEQUENCE [LARGE SCALE GENOMIC DNA]</scope>
    <source>
        <strain>E2348/69 / EPEC</strain>
    </source>
</reference>
<evidence type="ECO:0000255" key="1">
    <source>
        <dbReference type="HAMAP-Rule" id="MF_00514"/>
    </source>
</evidence>
<evidence type="ECO:0000256" key="2">
    <source>
        <dbReference type="SAM" id="MobiDB-lite"/>
    </source>
</evidence>
<evidence type="ECO:0000305" key="3"/>
<comment type="similarity">
    <text evidence="1">Belongs to the bacterial ribosomal protein bL35 family.</text>
</comment>
<organism>
    <name type="scientific">Escherichia coli O127:H6 (strain E2348/69 / EPEC)</name>
    <dbReference type="NCBI Taxonomy" id="574521"/>
    <lineage>
        <taxon>Bacteria</taxon>
        <taxon>Pseudomonadati</taxon>
        <taxon>Pseudomonadota</taxon>
        <taxon>Gammaproteobacteria</taxon>
        <taxon>Enterobacterales</taxon>
        <taxon>Enterobacteriaceae</taxon>
        <taxon>Escherichia</taxon>
    </lineage>
</organism>
<keyword id="KW-1185">Reference proteome</keyword>
<keyword id="KW-0687">Ribonucleoprotein</keyword>
<keyword id="KW-0689">Ribosomal protein</keyword>
<accession>B7USA0</accession>
<proteinExistence type="inferred from homology"/>
<dbReference type="EMBL" id="FM180568">
    <property type="protein sequence ID" value="CAS09394.1"/>
    <property type="molecule type" value="Genomic_DNA"/>
</dbReference>
<dbReference type="RefSeq" id="WP_012578919.1">
    <property type="nucleotide sequence ID" value="NC_011601.1"/>
</dbReference>
<dbReference type="SMR" id="B7USA0"/>
<dbReference type="KEGG" id="ecg:E2348C_1846"/>
<dbReference type="HOGENOM" id="CLU_169643_1_1_6"/>
<dbReference type="Proteomes" id="UP000008205">
    <property type="component" value="Chromosome"/>
</dbReference>
<dbReference type="GO" id="GO:0022625">
    <property type="term" value="C:cytosolic large ribosomal subunit"/>
    <property type="evidence" value="ECO:0007669"/>
    <property type="project" value="TreeGrafter"/>
</dbReference>
<dbReference type="GO" id="GO:0003735">
    <property type="term" value="F:structural constituent of ribosome"/>
    <property type="evidence" value="ECO:0007669"/>
    <property type="project" value="InterPro"/>
</dbReference>
<dbReference type="GO" id="GO:0006412">
    <property type="term" value="P:translation"/>
    <property type="evidence" value="ECO:0007669"/>
    <property type="project" value="UniProtKB-UniRule"/>
</dbReference>
<dbReference type="FunFam" id="4.10.410.60:FF:000001">
    <property type="entry name" value="50S ribosomal protein L35"/>
    <property type="match status" value="1"/>
</dbReference>
<dbReference type="Gene3D" id="4.10.410.60">
    <property type="match status" value="1"/>
</dbReference>
<dbReference type="HAMAP" id="MF_00514">
    <property type="entry name" value="Ribosomal_bL35"/>
    <property type="match status" value="1"/>
</dbReference>
<dbReference type="InterPro" id="IPR001706">
    <property type="entry name" value="Ribosomal_bL35"/>
</dbReference>
<dbReference type="InterPro" id="IPR021137">
    <property type="entry name" value="Ribosomal_bL35-like"/>
</dbReference>
<dbReference type="InterPro" id="IPR018265">
    <property type="entry name" value="Ribosomal_bL35_CS"/>
</dbReference>
<dbReference type="InterPro" id="IPR037229">
    <property type="entry name" value="Ribosomal_bL35_sf"/>
</dbReference>
<dbReference type="NCBIfam" id="TIGR00001">
    <property type="entry name" value="rpmI_bact"/>
    <property type="match status" value="1"/>
</dbReference>
<dbReference type="PANTHER" id="PTHR33343">
    <property type="entry name" value="54S RIBOSOMAL PROTEIN BL35M"/>
    <property type="match status" value="1"/>
</dbReference>
<dbReference type="PANTHER" id="PTHR33343:SF1">
    <property type="entry name" value="LARGE RIBOSOMAL SUBUNIT PROTEIN BL35M"/>
    <property type="match status" value="1"/>
</dbReference>
<dbReference type="Pfam" id="PF01632">
    <property type="entry name" value="Ribosomal_L35p"/>
    <property type="match status" value="1"/>
</dbReference>
<dbReference type="PRINTS" id="PR00064">
    <property type="entry name" value="RIBOSOMALL35"/>
</dbReference>
<dbReference type="SUPFAM" id="SSF143034">
    <property type="entry name" value="L35p-like"/>
    <property type="match status" value="1"/>
</dbReference>
<dbReference type="PROSITE" id="PS00936">
    <property type="entry name" value="RIBOSOMAL_L35"/>
    <property type="match status" value="1"/>
</dbReference>
<name>RL35_ECO27</name>
<sequence>MPKIKTVRGAAKRFKKTGKGGFKHKHANLRHILTKKATKRKRHLRPKAMVSKGDLGLIIACLPYA</sequence>
<protein>
    <recommendedName>
        <fullName evidence="1">Large ribosomal subunit protein bL35</fullName>
    </recommendedName>
    <alternativeName>
        <fullName evidence="3">50S ribosomal protein L35</fullName>
    </alternativeName>
</protein>
<feature type="chain" id="PRO_1000194073" description="Large ribosomal subunit protein bL35">
    <location>
        <begin position="1"/>
        <end position="65"/>
    </location>
</feature>
<feature type="region of interest" description="Disordered" evidence="2">
    <location>
        <begin position="1"/>
        <end position="22"/>
    </location>
</feature>
<feature type="compositionally biased region" description="Basic residues" evidence="2">
    <location>
        <begin position="10"/>
        <end position="22"/>
    </location>
</feature>